<name>HEM1_BORPA</name>
<sequence>MSVAVLAFGLNHTSAPVSVRERVSMPVDLVKPALEGLRATFGGAVREAAILSTCNRTELYCAAEGQVAEHLPAWLAEHNRLEAAALRPHLYRHQHDDAVRHAFRVASGLDSMVLGEPQILGQMKDAVRAANEAGALGTLLHQLFQRTFSVAKEVRSQTAIGAHSVSMAAAAVRLAERVFGQLEDARTLFIGAGEMIELCATHFAAQRPRSMVVANRTIERAETLAGRFSAQTMKLADLTERLAEFDVIVSCTASSLPILGLGMVERATRQRRHRPMVMIDLAVPRDIEPEVGRLDDVYLYSVDDLGRLVQSGTDARRAAVVQAEAIIETRVQGFMHWMQSREVVPVIRDLHQAADDVRAAELERARRMLARGESPEAVLEQLAHGLTQKYLHGPLAALNRSEGDERRQLLAWVPRLFPGRDSRR</sequence>
<proteinExistence type="inferred from homology"/>
<protein>
    <recommendedName>
        <fullName evidence="1">Glutamyl-tRNA reductase</fullName>
        <shortName evidence="1">GluTR</shortName>
        <ecNumber evidence="1">1.2.1.70</ecNumber>
    </recommendedName>
</protein>
<feature type="chain" id="PRO_0000113998" description="Glutamyl-tRNA reductase">
    <location>
        <begin position="1"/>
        <end position="424"/>
    </location>
</feature>
<feature type="active site" description="Nucleophile" evidence="1">
    <location>
        <position position="54"/>
    </location>
</feature>
<feature type="binding site" evidence="1">
    <location>
        <begin position="53"/>
        <end position="56"/>
    </location>
    <ligand>
        <name>substrate</name>
    </ligand>
</feature>
<feature type="binding site" evidence="1">
    <location>
        <position position="111"/>
    </location>
    <ligand>
        <name>substrate</name>
    </ligand>
</feature>
<feature type="binding site" evidence="1">
    <location>
        <begin position="116"/>
        <end position="118"/>
    </location>
    <ligand>
        <name>substrate</name>
    </ligand>
</feature>
<feature type="binding site" evidence="1">
    <location>
        <position position="122"/>
    </location>
    <ligand>
        <name>substrate</name>
    </ligand>
</feature>
<feature type="binding site" evidence="1">
    <location>
        <begin position="191"/>
        <end position="196"/>
    </location>
    <ligand>
        <name>NADP(+)</name>
        <dbReference type="ChEBI" id="CHEBI:58349"/>
    </ligand>
</feature>
<feature type="site" description="Important for activity" evidence="1">
    <location>
        <position position="101"/>
    </location>
</feature>
<evidence type="ECO:0000255" key="1">
    <source>
        <dbReference type="HAMAP-Rule" id="MF_00087"/>
    </source>
</evidence>
<organism>
    <name type="scientific">Bordetella parapertussis (strain 12822 / ATCC BAA-587 / NCTC 13253)</name>
    <dbReference type="NCBI Taxonomy" id="257311"/>
    <lineage>
        <taxon>Bacteria</taxon>
        <taxon>Pseudomonadati</taxon>
        <taxon>Pseudomonadota</taxon>
        <taxon>Betaproteobacteria</taxon>
        <taxon>Burkholderiales</taxon>
        <taxon>Alcaligenaceae</taxon>
        <taxon>Bordetella</taxon>
    </lineage>
</organism>
<accession>Q7WCE4</accession>
<dbReference type="EC" id="1.2.1.70" evidence="1"/>
<dbReference type="EMBL" id="BX640424">
    <property type="protein sequence ID" value="CAE35965.1"/>
    <property type="molecule type" value="Genomic_DNA"/>
</dbReference>
<dbReference type="RefSeq" id="WP_003807616.1">
    <property type="nucleotide sequence ID" value="NC_002928.3"/>
</dbReference>
<dbReference type="SMR" id="Q7WCE4"/>
<dbReference type="GeneID" id="93206615"/>
<dbReference type="KEGG" id="bpa:BPP0381"/>
<dbReference type="HOGENOM" id="CLU_035113_2_2_4"/>
<dbReference type="UniPathway" id="UPA00251">
    <property type="reaction ID" value="UER00316"/>
</dbReference>
<dbReference type="Proteomes" id="UP000001421">
    <property type="component" value="Chromosome"/>
</dbReference>
<dbReference type="GO" id="GO:0008883">
    <property type="term" value="F:glutamyl-tRNA reductase activity"/>
    <property type="evidence" value="ECO:0007669"/>
    <property type="project" value="UniProtKB-UniRule"/>
</dbReference>
<dbReference type="GO" id="GO:0050661">
    <property type="term" value="F:NADP binding"/>
    <property type="evidence" value="ECO:0007669"/>
    <property type="project" value="InterPro"/>
</dbReference>
<dbReference type="GO" id="GO:0019353">
    <property type="term" value="P:protoporphyrinogen IX biosynthetic process from glutamate"/>
    <property type="evidence" value="ECO:0007669"/>
    <property type="project" value="TreeGrafter"/>
</dbReference>
<dbReference type="CDD" id="cd05213">
    <property type="entry name" value="NAD_bind_Glutamyl_tRNA_reduct"/>
    <property type="match status" value="1"/>
</dbReference>
<dbReference type="FunFam" id="3.30.460.30:FF:000001">
    <property type="entry name" value="Glutamyl-tRNA reductase"/>
    <property type="match status" value="1"/>
</dbReference>
<dbReference type="FunFam" id="3.40.50.720:FF:000031">
    <property type="entry name" value="Glutamyl-tRNA reductase"/>
    <property type="match status" value="1"/>
</dbReference>
<dbReference type="Gene3D" id="3.30.460.30">
    <property type="entry name" value="Glutamyl-tRNA reductase, N-terminal domain"/>
    <property type="match status" value="1"/>
</dbReference>
<dbReference type="Gene3D" id="3.40.50.720">
    <property type="entry name" value="NAD(P)-binding Rossmann-like Domain"/>
    <property type="match status" value="1"/>
</dbReference>
<dbReference type="HAMAP" id="MF_00087">
    <property type="entry name" value="Glu_tRNA_reductase"/>
    <property type="match status" value="1"/>
</dbReference>
<dbReference type="InterPro" id="IPR000343">
    <property type="entry name" value="4pyrrol_synth_GluRdtase"/>
</dbReference>
<dbReference type="InterPro" id="IPR015896">
    <property type="entry name" value="4pyrrol_synth_GluRdtase_dimer"/>
</dbReference>
<dbReference type="InterPro" id="IPR015895">
    <property type="entry name" value="4pyrrol_synth_GluRdtase_N"/>
</dbReference>
<dbReference type="InterPro" id="IPR018214">
    <property type="entry name" value="GluRdtase_CS"/>
</dbReference>
<dbReference type="InterPro" id="IPR036453">
    <property type="entry name" value="GluRdtase_dimer_dom_sf"/>
</dbReference>
<dbReference type="InterPro" id="IPR036343">
    <property type="entry name" value="GluRdtase_N_sf"/>
</dbReference>
<dbReference type="InterPro" id="IPR036291">
    <property type="entry name" value="NAD(P)-bd_dom_sf"/>
</dbReference>
<dbReference type="InterPro" id="IPR006151">
    <property type="entry name" value="Shikm_DH/Glu-tRNA_Rdtase"/>
</dbReference>
<dbReference type="NCBIfam" id="TIGR01035">
    <property type="entry name" value="hemA"/>
    <property type="match status" value="1"/>
</dbReference>
<dbReference type="PANTHER" id="PTHR43013">
    <property type="entry name" value="GLUTAMYL-TRNA REDUCTASE"/>
    <property type="match status" value="1"/>
</dbReference>
<dbReference type="PANTHER" id="PTHR43013:SF1">
    <property type="entry name" value="GLUTAMYL-TRNA REDUCTASE"/>
    <property type="match status" value="1"/>
</dbReference>
<dbReference type="Pfam" id="PF00745">
    <property type="entry name" value="GlutR_dimer"/>
    <property type="match status" value="1"/>
</dbReference>
<dbReference type="Pfam" id="PF05201">
    <property type="entry name" value="GlutR_N"/>
    <property type="match status" value="1"/>
</dbReference>
<dbReference type="Pfam" id="PF01488">
    <property type="entry name" value="Shikimate_DH"/>
    <property type="match status" value="1"/>
</dbReference>
<dbReference type="PIRSF" id="PIRSF000445">
    <property type="entry name" value="4pyrrol_synth_GluRdtase"/>
    <property type="match status" value="1"/>
</dbReference>
<dbReference type="SUPFAM" id="SSF69742">
    <property type="entry name" value="Glutamyl tRNA-reductase catalytic, N-terminal domain"/>
    <property type="match status" value="1"/>
</dbReference>
<dbReference type="SUPFAM" id="SSF69075">
    <property type="entry name" value="Glutamyl tRNA-reductase dimerization domain"/>
    <property type="match status" value="1"/>
</dbReference>
<dbReference type="SUPFAM" id="SSF51735">
    <property type="entry name" value="NAD(P)-binding Rossmann-fold domains"/>
    <property type="match status" value="1"/>
</dbReference>
<dbReference type="PROSITE" id="PS00747">
    <property type="entry name" value="GLUTR"/>
    <property type="match status" value="1"/>
</dbReference>
<keyword id="KW-0521">NADP</keyword>
<keyword id="KW-0560">Oxidoreductase</keyword>
<keyword id="KW-0627">Porphyrin biosynthesis</keyword>
<comment type="function">
    <text evidence="1">Catalyzes the NADPH-dependent reduction of glutamyl-tRNA(Glu) to glutamate 1-semialdehyde (GSA).</text>
</comment>
<comment type="catalytic activity">
    <reaction evidence="1">
        <text>(S)-4-amino-5-oxopentanoate + tRNA(Glu) + NADP(+) = L-glutamyl-tRNA(Glu) + NADPH + H(+)</text>
        <dbReference type="Rhea" id="RHEA:12344"/>
        <dbReference type="Rhea" id="RHEA-COMP:9663"/>
        <dbReference type="Rhea" id="RHEA-COMP:9680"/>
        <dbReference type="ChEBI" id="CHEBI:15378"/>
        <dbReference type="ChEBI" id="CHEBI:57501"/>
        <dbReference type="ChEBI" id="CHEBI:57783"/>
        <dbReference type="ChEBI" id="CHEBI:58349"/>
        <dbReference type="ChEBI" id="CHEBI:78442"/>
        <dbReference type="ChEBI" id="CHEBI:78520"/>
        <dbReference type="EC" id="1.2.1.70"/>
    </reaction>
</comment>
<comment type="pathway">
    <text evidence="1">Porphyrin-containing compound metabolism; protoporphyrin-IX biosynthesis; 5-aminolevulinate from L-glutamyl-tRNA(Glu): step 1/2.</text>
</comment>
<comment type="subunit">
    <text evidence="1">Homodimer.</text>
</comment>
<comment type="domain">
    <text evidence="1">Possesses an unusual extended V-shaped dimeric structure with each monomer consisting of three distinct domains arranged along a curved 'spinal' alpha-helix. The N-terminal catalytic domain specifically recognizes the glutamate moiety of the substrate. The second domain is the NADPH-binding domain, and the third C-terminal domain is responsible for dimerization.</text>
</comment>
<comment type="miscellaneous">
    <text evidence="1">During catalysis, the active site Cys acts as a nucleophile attacking the alpha-carbonyl group of tRNA-bound glutamate with the formation of a thioester intermediate between enzyme and glutamate, and the concomitant release of tRNA(Glu). The thioester intermediate is finally reduced by direct hydride transfer from NADPH, to form the product GSA.</text>
</comment>
<comment type="similarity">
    <text evidence="1">Belongs to the glutamyl-tRNA reductase family.</text>
</comment>
<gene>
    <name evidence="1" type="primary">hemA</name>
    <name type="ordered locus">BPP0381</name>
</gene>
<reference key="1">
    <citation type="journal article" date="2003" name="Nat. Genet.">
        <title>Comparative analysis of the genome sequences of Bordetella pertussis, Bordetella parapertussis and Bordetella bronchiseptica.</title>
        <authorList>
            <person name="Parkhill J."/>
            <person name="Sebaihia M."/>
            <person name="Preston A."/>
            <person name="Murphy L.D."/>
            <person name="Thomson N.R."/>
            <person name="Harris D.E."/>
            <person name="Holden M.T.G."/>
            <person name="Churcher C.M."/>
            <person name="Bentley S.D."/>
            <person name="Mungall K.L."/>
            <person name="Cerdeno-Tarraga A.-M."/>
            <person name="Temple L."/>
            <person name="James K.D."/>
            <person name="Harris B."/>
            <person name="Quail M.A."/>
            <person name="Achtman M."/>
            <person name="Atkin R."/>
            <person name="Baker S."/>
            <person name="Basham D."/>
            <person name="Bason N."/>
            <person name="Cherevach I."/>
            <person name="Chillingworth T."/>
            <person name="Collins M."/>
            <person name="Cronin A."/>
            <person name="Davis P."/>
            <person name="Doggett J."/>
            <person name="Feltwell T."/>
            <person name="Goble A."/>
            <person name="Hamlin N."/>
            <person name="Hauser H."/>
            <person name="Holroyd S."/>
            <person name="Jagels K."/>
            <person name="Leather S."/>
            <person name="Moule S."/>
            <person name="Norberczak H."/>
            <person name="O'Neil S."/>
            <person name="Ormond D."/>
            <person name="Price C."/>
            <person name="Rabbinowitsch E."/>
            <person name="Rutter S."/>
            <person name="Sanders M."/>
            <person name="Saunders D."/>
            <person name="Seeger K."/>
            <person name="Sharp S."/>
            <person name="Simmonds M."/>
            <person name="Skelton J."/>
            <person name="Squares R."/>
            <person name="Squares S."/>
            <person name="Stevens K."/>
            <person name="Unwin L."/>
            <person name="Whitehead S."/>
            <person name="Barrell B.G."/>
            <person name="Maskell D.J."/>
        </authorList>
    </citation>
    <scope>NUCLEOTIDE SEQUENCE [LARGE SCALE GENOMIC DNA]</scope>
    <source>
        <strain>12822 / ATCC BAA-587 / NCTC 13253</strain>
    </source>
</reference>